<accession>A7Z640</accession>
<sequence length="224" mass="24915">MDKKLSIAIDGPAAAGKSTVAKIVAEKKSYVYIDTGAMYRAITYTALKQNADLTDEAALTELLKRTEIELVSVPEGQIVLVNGEDVTEEIRKDEVSNQVSIAAKHKGVREEMVKRQQQLGQKGGVVMDGRDIGTHVLPDAEVKIFLLASVEERAKRRYEENKKKGYDVNYETLIEEIARRDKLDSEREVSPLRKAEDAIEIDTTSLSIAEVAGKILEIVEQKSR</sequence>
<keyword id="KW-0067">ATP-binding</keyword>
<keyword id="KW-0963">Cytoplasm</keyword>
<keyword id="KW-0418">Kinase</keyword>
<keyword id="KW-0547">Nucleotide-binding</keyword>
<keyword id="KW-0808">Transferase</keyword>
<proteinExistence type="inferred from homology"/>
<reference key="1">
    <citation type="journal article" date="2007" name="Nat. Biotechnol.">
        <title>Comparative analysis of the complete genome sequence of the plant growth-promoting bacterium Bacillus amyloliquefaciens FZB42.</title>
        <authorList>
            <person name="Chen X.H."/>
            <person name="Koumoutsi A."/>
            <person name="Scholz R."/>
            <person name="Eisenreich A."/>
            <person name="Schneider K."/>
            <person name="Heinemeyer I."/>
            <person name="Morgenstern B."/>
            <person name="Voss B."/>
            <person name="Hess W.R."/>
            <person name="Reva O."/>
            <person name="Junge H."/>
            <person name="Voigt B."/>
            <person name="Jungblut P.R."/>
            <person name="Vater J."/>
            <person name="Suessmuth R."/>
            <person name="Liesegang H."/>
            <person name="Strittmatter A."/>
            <person name="Gottschalk G."/>
            <person name="Borriss R."/>
        </authorList>
    </citation>
    <scope>NUCLEOTIDE SEQUENCE [LARGE SCALE GENOMIC DNA]</scope>
    <source>
        <strain>DSM 23117 / BGSC 10A6 / LMG 26770 / FZB42</strain>
    </source>
</reference>
<protein>
    <recommendedName>
        <fullName evidence="1">Cytidylate kinase</fullName>
        <shortName evidence="1">CK</shortName>
        <ecNumber evidence="1">2.7.4.25</ecNumber>
    </recommendedName>
    <alternativeName>
        <fullName evidence="1">Cytidine monophosphate kinase</fullName>
        <shortName evidence="1">CMP kinase</shortName>
    </alternativeName>
</protein>
<name>KCY_BACVZ</name>
<organism>
    <name type="scientific">Bacillus velezensis (strain DSM 23117 / BGSC 10A6 / LMG 26770 / FZB42)</name>
    <name type="common">Bacillus amyloliquefaciens subsp. plantarum</name>
    <dbReference type="NCBI Taxonomy" id="326423"/>
    <lineage>
        <taxon>Bacteria</taxon>
        <taxon>Bacillati</taxon>
        <taxon>Bacillota</taxon>
        <taxon>Bacilli</taxon>
        <taxon>Bacillales</taxon>
        <taxon>Bacillaceae</taxon>
        <taxon>Bacillus</taxon>
        <taxon>Bacillus amyloliquefaciens group</taxon>
    </lineage>
</organism>
<evidence type="ECO:0000255" key="1">
    <source>
        <dbReference type="HAMAP-Rule" id="MF_00238"/>
    </source>
</evidence>
<feature type="chain" id="PRO_1000048182" description="Cytidylate kinase">
    <location>
        <begin position="1"/>
        <end position="224"/>
    </location>
</feature>
<feature type="binding site" evidence="1">
    <location>
        <begin position="11"/>
        <end position="19"/>
    </location>
    <ligand>
        <name>ATP</name>
        <dbReference type="ChEBI" id="CHEBI:30616"/>
    </ligand>
</feature>
<comment type="catalytic activity">
    <reaction evidence="1">
        <text>CMP + ATP = CDP + ADP</text>
        <dbReference type="Rhea" id="RHEA:11600"/>
        <dbReference type="ChEBI" id="CHEBI:30616"/>
        <dbReference type="ChEBI" id="CHEBI:58069"/>
        <dbReference type="ChEBI" id="CHEBI:60377"/>
        <dbReference type="ChEBI" id="CHEBI:456216"/>
        <dbReference type="EC" id="2.7.4.25"/>
    </reaction>
</comment>
<comment type="catalytic activity">
    <reaction evidence="1">
        <text>dCMP + ATP = dCDP + ADP</text>
        <dbReference type="Rhea" id="RHEA:25094"/>
        <dbReference type="ChEBI" id="CHEBI:30616"/>
        <dbReference type="ChEBI" id="CHEBI:57566"/>
        <dbReference type="ChEBI" id="CHEBI:58593"/>
        <dbReference type="ChEBI" id="CHEBI:456216"/>
        <dbReference type="EC" id="2.7.4.25"/>
    </reaction>
</comment>
<comment type="subcellular location">
    <subcellularLocation>
        <location evidence="1">Cytoplasm</location>
    </subcellularLocation>
</comment>
<comment type="similarity">
    <text evidence="1">Belongs to the cytidylate kinase family. Type 1 subfamily.</text>
</comment>
<dbReference type="EC" id="2.7.4.25" evidence="1"/>
<dbReference type="EMBL" id="CP000560">
    <property type="protein sequence ID" value="ABS74466.1"/>
    <property type="molecule type" value="Genomic_DNA"/>
</dbReference>
<dbReference type="RefSeq" id="WP_007409450.1">
    <property type="nucleotide sequence ID" value="NC_009725.2"/>
</dbReference>
<dbReference type="SMR" id="A7Z640"/>
<dbReference type="GeneID" id="93081240"/>
<dbReference type="KEGG" id="bay:RBAM_021040"/>
<dbReference type="HOGENOM" id="CLU_079959_0_2_9"/>
<dbReference type="Proteomes" id="UP000001120">
    <property type="component" value="Chromosome"/>
</dbReference>
<dbReference type="GO" id="GO:0005829">
    <property type="term" value="C:cytosol"/>
    <property type="evidence" value="ECO:0007669"/>
    <property type="project" value="TreeGrafter"/>
</dbReference>
<dbReference type="GO" id="GO:0005524">
    <property type="term" value="F:ATP binding"/>
    <property type="evidence" value="ECO:0007669"/>
    <property type="project" value="UniProtKB-UniRule"/>
</dbReference>
<dbReference type="GO" id="GO:0036430">
    <property type="term" value="F:CMP kinase activity"/>
    <property type="evidence" value="ECO:0007669"/>
    <property type="project" value="RHEA"/>
</dbReference>
<dbReference type="GO" id="GO:0036431">
    <property type="term" value="F:dCMP kinase activity"/>
    <property type="evidence" value="ECO:0007669"/>
    <property type="project" value="RHEA"/>
</dbReference>
<dbReference type="GO" id="GO:0015949">
    <property type="term" value="P:nucleobase-containing small molecule interconversion"/>
    <property type="evidence" value="ECO:0007669"/>
    <property type="project" value="TreeGrafter"/>
</dbReference>
<dbReference type="GO" id="GO:0006220">
    <property type="term" value="P:pyrimidine nucleotide metabolic process"/>
    <property type="evidence" value="ECO:0007669"/>
    <property type="project" value="UniProtKB-UniRule"/>
</dbReference>
<dbReference type="CDD" id="cd02020">
    <property type="entry name" value="CMPK"/>
    <property type="match status" value="1"/>
</dbReference>
<dbReference type="FunFam" id="3.40.50.300:FF:000484">
    <property type="entry name" value="Cytidylate kinase"/>
    <property type="match status" value="1"/>
</dbReference>
<dbReference type="Gene3D" id="3.40.50.300">
    <property type="entry name" value="P-loop containing nucleotide triphosphate hydrolases"/>
    <property type="match status" value="1"/>
</dbReference>
<dbReference type="HAMAP" id="MF_00238">
    <property type="entry name" value="Cytidyl_kinase_type1"/>
    <property type="match status" value="1"/>
</dbReference>
<dbReference type="InterPro" id="IPR003136">
    <property type="entry name" value="Cytidylate_kin"/>
</dbReference>
<dbReference type="InterPro" id="IPR011994">
    <property type="entry name" value="Cytidylate_kinase_dom"/>
</dbReference>
<dbReference type="InterPro" id="IPR027417">
    <property type="entry name" value="P-loop_NTPase"/>
</dbReference>
<dbReference type="NCBIfam" id="TIGR00017">
    <property type="entry name" value="cmk"/>
    <property type="match status" value="1"/>
</dbReference>
<dbReference type="PANTHER" id="PTHR21299:SF2">
    <property type="entry name" value="CYTIDYLATE KINASE"/>
    <property type="match status" value="1"/>
</dbReference>
<dbReference type="PANTHER" id="PTHR21299">
    <property type="entry name" value="CYTIDYLATE KINASE/PANTOATE-BETA-ALANINE LIGASE"/>
    <property type="match status" value="1"/>
</dbReference>
<dbReference type="Pfam" id="PF02224">
    <property type="entry name" value="Cytidylate_kin"/>
    <property type="match status" value="1"/>
</dbReference>
<dbReference type="SUPFAM" id="SSF52540">
    <property type="entry name" value="P-loop containing nucleoside triphosphate hydrolases"/>
    <property type="match status" value="1"/>
</dbReference>
<gene>
    <name evidence="1" type="primary">cmk</name>
    <name type="ordered locus">RBAM_021040</name>
</gene>